<evidence type="ECO:0000255" key="1"/>
<evidence type="ECO:0000256" key="2">
    <source>
        <dbReference type="SAM" id="MobiDB-lite"/>
    </source>
</evidence>
<protein>
    <recommendedName>
        <fullName>Uncharacterized protein YhhA</fullName>
    </recommendedName>
    <alternativeName>
        <fullName>ORFQ</fullName>
    </alternativeName>
</protein>
<feature type="signal peptide" evidence="1">
    <location>
        <begin position="1"/>
        <end position="17"/>
    </location>
</feature>
<feature type="chain" id="PRO_0000013924" description="Uncharacterized protein YhhA">
    <location>
        <begin position="18"/>
        <end position="146"/>
    </location>
</feature>
<feature type="region of interest" description="Disordered" evidence="2">
    <location>
        <begin position="27"/>
        <end position="54"/>
    </location>
</feature>
<feature type="region of interest" description="Disordered" evidence="2">
    <location>
        <begin position="70"/>
        <end position="146"/>
    </location>
</feature>
<feature type="compositionally biased region" description="Low complexity" evidence="2">
    <location>
        <begin position="32"/>
        <end position="54"/>
    </location>
</feature>
<feature type="compositionally biased region" description="Polar residues" evidence="2">
    <location>
        <begin position="77"/>
        <end position="118"/>
    </location>
</feature>
<name>YHHA_ECOLI</name>
<sequence>MKRLLILTALLPFVGFAQPINTLNNPNQPGYQIPSQQRMQTQMQTQQIQQKGMLNQQLKTQTQLQQQHLENQINNNSQRVLQSQPGERNPARQQMLPNTNGGMLNSNRNPDSSLNQQHMLPERRNGDMLNQPSTPQPDIPLKTIGP</sequence>
<comment type="interaction">
    <interactant intactId="EBI-550623">
        <id>P0ADX7</id>
    </interactant>
    <interactant intactId="EBI-550562">
        <id>P0ABH0</id>
        <label>ftsA</label>
    </interactant>
    <organismsDiffer>false</organismsDiffer>
    <experiments>3</experiments>
</comment>
<accession>P0ADX7</accession>
<accession>P23850</accession>
<accession>Q2M7B1</accession>
<reference key="1">
    <citation type="journal article" date="1991" name="Mol. Gen. Genet.">
        <title>Characterization of two genes, glpQ and ugpQ, encoding glycerophosphoryl diester phosphodiesterases of Escherichia coli.</title>
        <authorList>
            <person name="Tommassen J."/>
            <person name="Eiglmeier K."/>
            <person name="Cole S.T."/>
            <person name="Overduin P."/>
            <person name="Larson T.J."/>
            <person name="Boos W."/>
        </authorList>
    </citation>
    <scope>NUCLEOTIDE SEQUENCE [GENOMIC DNA]</scope>
</reference>
<reference key="2">
    <citation type="journal article" date="1994" name="Nucleic Acids Res.">
        <title>Analysis of the Escherichia coli genome. V. DNA sequence of the region from 76.0 to 81.5 minutes.</title>
        <authorList>
            <person name="Sofia H.J."/>
            <person name="Burland V."/>
            <person name="Daniels D.L."/>
            <person name="Plunkett G. III"/>
            <person name="Blattner F.R."/>
        </authorList>
    </citation>
    <scope>NUCLEOTIDE SEQUENCE [LARGE SCALE GENOMIC DNA]</scope>
    <source>
        <strain>K12 / MG1655 / ATCC 47076</strain>
    </source>
</reference>
<reference key="3">
    <citation type="journal article" date="1997" name="Science">
        <title>The complete genome sequence of Escherichia coli K-12.</title>
        <authorList>
            <person name="Blattner F.R."/>
            <person name="Plunkett G. III"/>
            <person name="Bloch C.A."/>
            <person name="Perna N.T."/>
            <person name="Burland V."/>
            <person name="Riley M."/>
            <person name="Collado-Vides J."/>
            <person name="Glasner J.D."/>
            <person name="Rode C.K."/>
            <person name="Mayhew G.F."/>
            <person name="Gregor J."/>
            <person name="Davis N.W."/>
            <person name="Kirkpatrick H.A."/>
            <person name="Goeden M.A."/>
            <person name="Rose D.J."/>
            <person name="Mau B."/>
            <person name="Shao Y."/>
        </authorList>
    </citation>
    <scope>NUCLEOTIDE SEQUENCE [LARGE SCALE GENOMIC DNA]</scope>
    <source>
        <strain>K12 / MG1655 / ATCC 47076</strain>
    </source>
</reference>
<reference key="4">
    <citation type="journal article" date="2006" name="Mol. Syst. Biol.">
        <title>Highly accurate genome sequences of Escherichia coli K-12 strains MG1655 and W3110.</title>
        <authorList>
            <person name="Hayashi K."/>
            <person name="Morooka N."/>
            <person name="Yamamoto Y."/>
            <person name="Fujita K."/>
            <person name="Isono K."/>
            <person name="Choi S."/>
            <person name="Ohtsubo E."/>
            <person name="Baba T."/>
            <person name="Wanner B.L."/>
            <person name="Mori H."/>
            <person name="Horiuchi T."/>
        </authorList>
    </citation>
    <scope>NUCLEOTIDE SEQUENCE [LARGE SCALE GENOMIC DNA]</scope>
    <source>
        <strain>K12 / W3110 / ATCC 27325 / DSM 5911</strain>
    </source>
</reference>
<gene>
    <name type="primary">yhhA</name>
    <name type="ordered locus">b3448</name>
    <name type="ordered locus">JW3413</name>
</gene>
<dbReference type="EMBL" id="X56908">
    <property type="protein sequence ID" value="CAA40225.1"/>
    <property type="molecule type" value="Genomic_DNA"/>
</dbReference>
<dbReference type="EMBL" id="U00039">
    <property type="protein sequence ID" value="AAB18423.1"/>
    <property type="molecule type" value="Genomic_DNA"/>
</dbReference>
<dbReference type="EMBL" id="U00096">
    <property type="protein sequence ID" value="AAC76473.1"/>
    <property type="molecule type" value="Genomic_DNA"/>
</dbReference>
<dbReference type="EMBL" id="AP009048">
    <property type="protein sequence ID" value="BAE77845.1"/>
    <property type="molecule type" value="Genomic_DNA"/>
</dbReference>
<dbReference type="PIR" id="S47667">
    <property type="entry name" value="S47667"/>
</dbReference>
<dbReference type="RefSeq" id="NP_417905.1">
    <property type="nucleotide sequence ID" value="NC_000913.3"/>
</dbReference>
<dbReference type="RefSeq" id="WP_000825996.1">
    <property type="nucleotide sequence ID" value="NZ_STEB01000004.1"/>
</dbReference>
<dbReference type="BioGRID" id="4261663">
    <property type="interactions" value="119"/>
</dbReference>
<dbReference type="BioGRID" id="852265">
    <property type="interactions" value="3"/>
</dbReference>
<dbReference type="DIP" id="DIP-47985N"/>
<dbReference type="FunCoup" id="P0ADX7">
    <property type="interactions" value="34"/>
</dbReference>
<dbReference type="IntAct" id="P0ADX7">
    <property type="interactions" value="3"/>
</dbReference>
<dbReference type="STRING" id="511145.b3448"/>
<dbReference type="jPOST" id="P0ADX7"/>
<dbReference type="PaxDb" id="511145-b3448"/>
<dbReference type="EnsemblBacteria" id="AAC76473">
    <property type="protein sequence ID" value="AAC76473"/>
    <property type="gene ID" value="b3448"/>
</dbReference>
<dbReference type="GeneID" id="947956"/>
<dbReference type="KEGG" id="ecj:JW3413"/>
<dbReference type="KEGG" id="eco:b3448"/>
<dbReference type="KEGG" id="ecoc:C3026_18675"/>
<dbReference type="PATRIC" id="fig|511145.12.peg.3545"/>
<dbReference type="EchoBASE" id="EB1171"/>
<dbReference type="eggNOG" id="ENOG5032THA">
    <property type="taxonomic scope" value="Bacteria"/>
</dbReference>
<dbReference type="HOGENOM" id="CLU_161250_0_0_6"/>
<dbReference type="InParanoid" id="P0ADX7"/>
<dbReference type="OMA" id="RMQTEMM"/>
<dbReference type="OrthoDB" id="6566603at2"/>
<dbReference type="PhylomeDB" id="P0ADX7"/>
<dbReference type="BioCyc" id="EcoCyc:EG11184-MONOMER"/>
<dbReference type="PRO" id="PR:P0ADX7"/>
<dbReference type="Proteomes" id="UP000000625">
    <property type="component" value="Chromosome"/>
</dbReference>
<dbReference type="InterPro" id="IPR020158">
    <property type="entry name" value="DUF2756"/>
</dbReference>
<dbReference type="NCBIfam" id="NF007675">
    <property type="entry name" value="PRK10350.1"/>
    <property type="match status" value="1"/>
</dbReference>
<dbReference type="Pfam" id="PF10956">
    <property type="entry name" value="DUF2756"/>
    <property type="match status" value="1"/>
</dbReference>
<proteinExistence type="evidence at protein level"/>
<keyword id="KW-1185">Reference proteome</keyword>
<keyword id="KW-0732">Signal</keyword>
<organism>
    <name type="scientific">Escherichia coli (strain K12)</name>
    <dbReference type="NCBI Taxonomy" id="83333"/>
    <lineage>
        <taxon>Bacteria</taxon>
        <taxon>Pseudomonadati</taxon>
        <taxon>Pseudomonadota</taxon>
        <taxon>Gammaproteobacteria</taxon>
        <taxon>Enterobacterales</taxon>
        <taxon>Enterobacteriaceae</taxon>
        <taxon>Escherichia</taxon>
    </lineage>
</organism>